<feature type="initiator methionine" description="Removed" evidence="5">
    <location>
        <position position="1"/>
    </location>
</feature>
<feature type="chain" id="PRO_0000160658" description="Alcohol dehydrogenase 1A">
    <location>
        <begin position="2"/>
        <end position="375"/>
    </location>
</feature>
<feature type="binding site" evidence="2 3 7 8">
    <location>
        <position position="47"/>
    </location>
    <ligand>
        <name>Zn(2+)</name>
        <dbReference type="ChEBI" id="CHEBI:29105"/>
        <label>1</label>
        <note>catalytic</note>
    </ligand>
</feature>
<feature type="binding site" evidence="2 3 7 8">
    <location>
        <begin position="48"/>
        <end position="52"/>
    </location>
    <ligand>
        <name>NAD(+)</name>
        <dbReference type="ChEBI" id="CHEBI:57540"/>
    </ligand>
</feature>
<feature type="binding site" evidence="2 3 7 8">
    <location>
        <position position="68"/>
    </location>
    <ligand>
        <name>Zn(2+)</name>
        <dbReference type="ChEBI" id="CHEBI:29105"/>
        <label>1</label>
        <note>catalytic</note>
    </ligand>
</feature>
<feature type="binding site" evidence="2 3 7 8">
    <location>
        <position position="98"/>
    </location>
    <ligand>
        <name>Zn(2+)</name>
        <dbReference type="ChEBI" id="CHEBI:29105"/>
        <label>2</label>
    </ligand>
</feature>
<feature type="binding site" evidence="2 3 7 8">
    <location>
        <position position="101"/>
    </location>
    <ligand>
        <name>Zn(2+)</name>
        <dbReference type="ChEBI" id="CHEBI:29105"/>
        <label>2</label>
    </ligand>
</feature>
<feature type="binding site" evidence="2 3 7 8">
    <location>
        <position position="104"/>
    </location>
    <ligand>
        <name>Zn(2+)</name>
        <dbReference type="ChEBI" id="CHEBI:29105"/>
        <label>2</label>
    </ligand>
</feature>
<feature type="binding site" evidence="2 3 7 8">
    <location>
        <position position="112"/>
    </location>
    <ligand>
        <name>Zn(2+)</name>
        <dbReference type="ChEBI" id="CHEBI:29105"/>
        <label>2</label>
    </ligand>
</feature>
<feature type="binding site" evidence="2 3 7 8">
    <location>
        <position position="175"/>
    </location>
    <ligand>
        <name>Zn(2+)</name>
        <dbReference type="ChEBI" id="CHEBI:29105"/>
        <label>1</label>
        <note>catalytic</note>
    </ligand>
</feature>
<feature type="binding site" evidence="2 3 7 8">
    <location>
        <begin position="200"/>
        <end position="205"/>
    </location>
    <ligand>
        <name>NAD(+)</name>
        <dbReference type="ChEBI" id="CHEBI:57540"/>
    </ligand>
</feature>
<feature type="binding site" evidence="2 3 7 8">
    <location>
        <position position="224"/>
    </location>
    <ligand>
        <name>NAD(+)</name>
        <dbReference type="ChEBI" id="CHEBI:57540"/>
    </ligand>
</feature>
<feature type="binding site" evidence="2 3 7 8">
    <location>
        <position position="229"/>
    </location>
    <ligand>
        <name>NAD(+)</name>
        <dbReference type="ChEBI" id="CHEBI:57540"/>
    </ligand>
</feature>
<feature type="binding site" evidence="2 3 7 8">
    <location>
        <position position="270"/>
    </location>
    <ligand>
        <name>NAD(+)</name>
        <dbReference type="ChEBI" id="CHEBI:57540"/>
    </ligand>
</feature>
<feature type="binding site" evidence="2 3 7 8">
    <location>
        <begin position="293"/>
        <end position="295"/>
    </location>
    <ligand>
        <name>NAD(+)</name>
        <dbReference type="ChEBI" id="CHEBI:57540"/>
    </ligand>
</feature>
<feature type="binding site" evidence="2 3 7 8">
    <location>
        <begin position="318"/>
        <end position="320"/>
    </location>
    <ligand>
        <name>NAD(+)</name>
        <dbReference type="ChEBI" id="CHEBI:57540"/>
    </ligand>
</feature>
<feature type="binding site" evidence="2 3 7 8">
    <location>
        <position position="370"/>
    </location>
    <ligand>
        <name>NAD(+)</name>
        <dbReference type="ChEBI" id="CHEBI:57540"/>
    </ligand>
</feature>
<feature type="modified residue" description="N-acetylserine" evidence="5">
    <location>
        <position position="2"/>
    </location>
</feature>
<feature type="modified residue" description="Phosphoserine" evidence="1">
    <location>
        <position position="23"/>
    </location>
</feature>
<feature type="strand" evidence="9">
    <location>
        <begin position="8"/>
        <end position="15"/>
    </location>
</feature>
<feature type="strand" evidence="9">
    <location>
        <begin position="23"/>
        <end position="29"/>
    </location>
</feature>
<feature type="strand" evidence="9">
    <location>
        <begin position="36"/>
        <end position="45"/>
    </location>
</feature>
<feature type="helix" evidence="9">
    <location>
        <begin position="48"/>
        <end position="54"/>
    </location>
</feature>
<feature type="strand" evidence="9">
    <location>
        <begin position="62"/>
        <end position="65"/>
    </location>
</feature>
<feature type="strand" evidence="9">
    <location>
        <begin position="69"/>
        <end position="77"/>
    </location>
</feature>
<feature type="strand" evidence="9">
    <location>
        <begin position="89"/>
        <end position="92"/>
    </location>
</feature>
<feature type="strand" evidence="9">
    <location>
        <begin position="99"/>
        <end position="101"/>
    </location>
</feature>
<feature type="helix" evidence="9">
    <location>
        <begin position="102"/>
        <end position="105"/>
    </location>
</feature>
<feature type="strand" evidence="9">
    <location>
        <begin position="116"/>
        <end position="119"/>
    </location>
</feature>
<feature type="strand" evidence="9">
    <location>
        <begin position="131"/>
        <end position="133"/>
    </location>
</feature>
<feature type="strand" evidence="9">
    <location>
        <begin position="136"/>
        <end position="139"/>
    </location>
</feature>
<feature type="turn" evidence="9">
    <location>
        <begin position="142"/>
        <end position="144"/>
    </location>
</feature>
<feature type="strand" evidence="9">
    <location>
        <begin position="147"/>
        <end position="154"/>
    </location>
</feature>
<feature type="helix" evidence="9">
    <location>
        <begin position="155"/>
        <end position="157"/>
    </location>
</feature>
<feature type="strand" evidence="9">
    <location>
        <begin position="158"/>
        <end position="160"/>
    </location>
</feature>
<feature type="helix" evidence="9">
    <location>
        <begin position="167"/>
        <end position="170"/>
    </location>
</feature>
<feature type="helix" evidence="9">
    <location>
        <begin position="171"/>
        <end position="174"/>
    </location>
</feature>
<feature type="helix" evidence="9">
    <location>
        <begin position="176"/>
        <end position="185"/>
    </location>
</feature>
<feature type="turn" evidence="9">
    <location>
        <begin position="186"/>
        <end position="188"/>
    </location>
</feature>
<feature type="strand" evidence="9">
    <location>
        <begin position="195"/>
        <end position="199"/>
    </location>
</feature>
<feature type="helix" evidence="9">
    <location>
        <begin position="203"/>
        <end position="214"/>
    </location>
</feature>
<feature type="strand" evidence="9">
    <location>
        <begin position="218"/>
        <end position="223"/>
    </location>
</feature>
<feature type="helix" evidence="9">
    <location>
        <begin position="227"/>
        <end position="229"/>
    </location>
</feature>
<feature type="helix" evidence="9">
    <location>
        <begin position="230"/>
        <end position="235"/>
    </location>
</feature>
<feature type="strand" evidence="9">
    <location>
        <begin position="239"/>
        <end position="242"/>
    </location>
</feature>
<feature type="helix" evidence="9">
    <location>
        <begin position="244"/>
        <end position="246"/>
    </location>
</feature>
<feature type="helix" evidence="9">
    <location>
        <begin position="251"/>
        <end position="258"/>
    </location>
</feature>
<feature type="turn" evidence="9">
    <location>
        <begin position="259"/>
        <end position="261"/>
    </location>
</feature>
<feature type="strand" evidence="9">
    <location>
        <begin position="263"/>
        <end position="268"/>
    </location>
</feature>
<feature type="helix" evidence="9">
    <location>
        <begin position="273"/>
        <end position="282"/>
    </location>
</feature>
<feature type="turn" evidence="9">
    <location>
        <begin position="285"/>
        <end position="287"/>
    </location>
</feature>
<feature type="strand" evidence="9">
    <location>
        <begin position="289"/>
        <end position="292"/>
    </location>
</feature>
<feature type="strand" evidence="9">
    <location>
        <begin position="302"/>
        <end position="304"/>
    </location>
</feature>
<feature type="helix" evidence="9">
    <location>
        <begin position="307"/>
        <end position="310"/>
    </location>
</feature>
<feature type="strand" evidence="9">
    <location>
        <begin position="314"/>
        <end position="317"/>
    </location>
</feature>
<feature type="helix" evidence="9">
    <location>
        <begin position="320"/>
        <end position="322"/>
    </location>
</feature>
<feature type="helix" evidence="9">
    <location>
        <begin position="325"/>
        <end position="337"/>
    </location>
</feature>
<feature type="helix" evidence="9">
    <location>
        <begin position="344"/>
        <end position="346"/>
    </location>
</feature>
<feature type="strand" evidence="9">
    <location>
        <begin position="347"/>
        <end position="352"/>
    </location>
</feature>
<feature type="helix" evidence="9">
    <location>
        <begin position="353"/>
        <end position="355"/>
    </location>
</feature>
<feature type="helix" evidence="9">
    <location>
        <begin position="356"/>
        <end position="364"/>
    </location>
</feature>
<feature type="strand" evidence="9">
    <location>
        <begin position="369"/>
        <end position="374"/>
    </location>
</feature>
<sequence length="375" mass="39859">MSTAGKVIKCKAAVLWELKKPFSIEEVEVAPPKAHEVRIKMVAVGICGTDDHVVSGTMVTPLPVILGHEAAGIVESVGEGVTTVKPGDKVIPLAIPQCGKCRICKNPESNYCLKNDVSNPQGTLQDGTSRFTCRRKPIHHFLGISTFSQYTVVDENAVAKIDAASPLEKVCLIGCGFSTGYGSAVNVAKVTPGSTCAVFGLGGVGLSAIMGCKAAGAARIIAVDINKDKFAKAKELGATECINPQDYKKPIQEVLKEMTDGGVDFSFEVIGRLDTMMASLLCCHEACGTSVIVGVPPDSQNLSMNPMLLLTGRTWKGAILGGFKSKECVPKLVADFMAKKFSLDALITHVLPFEKINEGFDLLHSGKSIRTILMF</sequence>
<name>ADH1A_HUMAN</name>
<keyword id="KW-0002">3D-structure</keyword>
<keyword id="KW-0007">Acetylation</keyword>
<keyword id="KW-0963">Cytoplasm</keyword>
<keyword id="KW-0903">Direct protein sequencing</keyword>
<keyword id="KW-0479">Metal-binding</keyword>
<keyword id="KW-0520">NAD</keyword>
<keyword id="KW-0560">Oxidoreductase</keyword>
<keyword id="KW-0597">Phosphoprotein</keyword>
<keyword id="KW-1267">Proteomics identification</keyword>
<keyword id="KW-1185">Reference proteome</keyword>
<keyword id="KW-0862">Zinc</keyword>
<accession>P07327</accession>
<accession>A8K3E3</accession>
<accession>Q17R68</accession>
<gene>
    <name type="primary">ADH1A</name>
    <name type="synonym">ADH1</name>
</gene>
<organism>
    <name type="scientific">Homo sapiens</name>
    <name type="common">Human</name>
    <dbReference type="NCBI Taxonomy" id="9606"/>
    <lineage>
        <taxon>Eukaryota</taxon>
        <taxon>Metazoa</taxon>
        <taxon>Chordata</taxon>
        <taxon>Craniata</taxon>
        <taxon>Vertebrata</taxon>
        <taxon>Euteleostomi</taxon>
        <taxon>Mammalia</taxon>
        <taxon>Eutheria</taxon>
        <taxon>Euarchontoglires</taxon>
        <taxon>Primates</taxon>
        <taxon>Haplorrhini</taxon>
        <taxon>Catarrhini</taxon>
        <taxon>Hominidae</taxon>
        <taxon>Homo</taxon>
    </lineage>
</organism>
<evidence type="ECO:0000250" key="1">
    <source>
        <dbReference type="UniProtKB" id="P00325"/>
    </source>
</evidence>
<evidence type="ECO:0000269" key="2">
    <source>
    </source>
</evidence>
<evidence type="ECO:0000269" key="3">
    <source>
    </source>
</evidence>
<evidence type="ECO:0000269" key="4">
    <source>
    </source>
</evidence>
<evidence type="ECO:0000269" key="5">
    <source>
    </source>
</evidence>
<evidence type="ECO:0000305" key="6"/>
<evidence type="ECO:0007744" key="7">
    <source>
        <dbReference type="PDB" id="1HSO"/>
    </source>
</evidence>
<evidence type="ECO:0007744" key="8">
    <source>
        <dbReference type="PDB" id="1U3T"/>
    </source>
</evidence>
<evidence type="ECO:0007829" key="9">
    <source>
        <dbReference type="PDB" id="1U3T"/>
    </source>
</evidence>
<proteinExistence type="evidence at protein level"/>
<dbReference type="EC" id="1.1.1.1" evidence="4"/>
<dbReference type="EMBL" id="M12963">
    <property type="protein sequence ID" value="AAA51590.1"/>
    <property type="molecule type" value="mRNA"/>
</dbReference>
<dbReference type="EMBL" id="M12271">
    <property type="protein sequence ID" value="AAA68131.1"/>
    <property type="molecule type" value="mRNA"/>
</dbReference>
<dbReference type="EMBL" id="BT019812">
    <property type="protein sequence ID" value="AAV38615.1"/>
    <property type="molecule type" value="mRNA"/>
</dbReference>
<dbReference type="EMBL" id="AY948115">
    <property type="protein sequence ID" value="AAX20115.1"/>
    <property type="molecule type" value="Genomic_DNA"/>
</dbReference>
<dbReference type="EMBL" id="AK290558">
    <property type="protein sequence ID" value="BAF83247.1"/>
    <property type="molecule type" value="mRNA"/>
</dbReference>
<dbReference type="EMBL" id="CH471057">
    <property type="protein sequence ID" value="EAX06094.1"/>
    <property type="molecule type" value="Genomic_DNA"/>
</dbReference>
<dbReference type="EMBL" id="BC074738">
    <property type="protein sequence ID" value="AAH74738.1"/>
    <property type="molecule type" value="mRNA"/>
</dbReference>
<dbReference type="EMBL" id="BC117442">
    <property type="protein sequence ID" value="AAI17443.1"/>
    <property type="molecule type" value="mRNA"/>
</dbReference>
<dbReference type="EMBL" id="BC126306">
    <property type="protein sequence ID" value="AAI26307.1"/>
    <property type="molecule type" value="mRNA"/>
</dbReference>
<dbReference type="EMBL" id="M37066">
    <property type="protein sequence ID" value="AAA51591.1"/>
    <property type="molecule type" value="Genomic_DNA"/>
</dbReference>
<dbReference type="CCDS" id="CCDS3648.1"/>
<dbReference type="PIR" id="S02265">
    <property type="entry name" value="DEHUAA"/>
</dbReference>
<dbReference type="RefSeq" id="NP_000658.1">
    <property type="nucleotide sequence ID" value="NM_000667.4"/>
</dbReference>
<dbReference type="PDB" id="1HSO">
    <property type="method" value="X-ray"/>
    <property type="resolution" value="2.50 A"/>
    <property type="chains" value="A/B=2-375"/>
</dbReference>
<dbReference type="PDB" id="1U3T">
    <property type="method" value="X-ray"/>
    <property type="resolution" value="2.49 A"/>
    <property type="chains" value="A/B=2-375"/>
</dbReference>
<dbReference type="PDBsum" id="1HSO"/>
<dbReference type="PDBsum" id="1U3T"/>
<dbReference type="SMR" id="P07327"/>
<dbReference type="BioGRID" id="106636">
    <property type="interactions" value="5"/>
</dbReference>
<dbReference type="CORUM" id="P07327"/>
<dbReference type="FunCoup" id="P07327">
    <property type="interactions" value="247"/>
</dbReference>
<dbReference type="IntAct" id="P07327">
    <property type="interactions" value="4"/>
</dbReference>
<dbReference type="STRING" id="9606.ENSP00000209668"/>
<dbReference type="BindingDB" id="P07327"/>
<dbReference type="ChEMBL" id="CHEMBL1970"/>
<dbReference type="DrugBank" id="DB02721">
    <property type="generic name" value="4-Iodopyrazole"/>
</dbReference>
<dbReference type="DrugBank" id="DB00898">
    <property type="generic name" value="Ethanol"/>
</dbReference>
<dbReference type="DrugBank" id="DB01213">
    <property type="generic name" value="Fomepizole"/>
</dbReference>
<dbReference type="DrugBank" id="DB04065">
    <property type="generic name" value="N-Cyclopentyl-N-Cyclobutylformamide"/>
</dbReference>
<dbReference type="DrugBank" id="DB00157">
    <property type="generic name" value="NADH"/>
</dbReference>
<dbReference type="DrugCentral" id="P07327"/>
<dbReference type="GlyGen" id="P07327">
    <property type="glycosylation" value="1 site"/>
</dbReference>
<dbReference type="iPTMnet" id="P07327"/>
<dbReference type="PhosphoSitePlus" id="P07327"/>
<dbReference type="BioMuta" id="ADH1A"/>
<dbReference type="DMDM" id="113390"/>
<dbReference type="jPOST" id="P07327"/>
<dbReference type="MassIVE" id="P07327"/>
<dbReference type="PaxDb" id="9606-ENSP00000209668"/>
<dbReference type="PeptideAtlas" id="P07327"/>
<dbReference type="ProteomicsDB" id="51988"/>
<dbReference type="Antibodypedia" id="4031">
    <property type="antibodies" value="261 antibodies from 32 providers"/>
</dbReference>
<dbReference type="DNASU" id="124"/>
<dbReference type="Ensembl" id="ENST00000209668.3">
    <property type="protein sequence ID" value="ENSP00000209668.2"/>
    <property type="gene ID" value="ENSG00000187758.8"/>
</dbReference>
<dbReference type="GeneID" id="124"/>
<dbReference type="KEGG" id="hsa:124"/>
<dbReference type="MANE-Select" id="ENST00000209668.3">
    <property type="protein sequence ID" value="ENSP00000209668.2"/>
    <property type="RefSeq nucleotide sequence ID" value="NM_000667.4"/>
    <property type="RefSeq protein sequence ID" value="NP_000658.1"/>
</dbReference>
<dbReference type="UCSC" id="uc003hur.3">
    <property type="organism name" value="human"/>
</dbReference>
<dbReference type="AGR" id="HGNC:249"/>
<dbReference type="CTD" id="124"/>
<dbReference type="DisGeNET" id="124"/>
<dbReference type="GeneCards" id="ADH1A"/>
<dbReference type="HGNC" id="HGNC:249">
    <property type="gene designation" value="ADH1A"/>
</dbReference>
<dbReference type="HPA" id="ENSG00000187758">
    <property type="expression patterns" value="Tissue enriched (liver)"/>
</dbReference>
<dbReference type="MIM" id="103700">
    <property type="type" value="gene"/>
</dbReference>
<dbReference type="neXtProt" id="NX_P07327"/>
<dbReference type="OpenTargets" id="ENSG00000187758"/>
<dbReference type="PharmGKB" id="PA24570"/>
<dbReference type="VEuPathDB" id="HostDB:ENSG00000187758"/>
<dbReference type="eggNOG" id="KOG0022">
    <property type="taxonomic scope" value="Eukaryota"/>
</dbReference>
<dbReference type="GeneTree" id="ENSGT00940000155234"/>
<dbReference type="HOGENOM" id="CLU_026673_14_0_1"/>
<dbReference type="InParanoid" id="P07327"/>
<dbReference type="OMA" id="EPWYCFA"/>
<dbReference type="OrthoDB" id="417550at2759"/>
<dbReference type="PAN-GO" id="P07327">
    <property type="GO annotations" value="7 GO annotations based on evolutionary models"/>
</dbReference>
<dbReference type="PhylomeDB" id="P07327"/>
<dbReference type="TreeFam" id="TF300429"/>
<dbReference type="PathwayCommons" id="P07327"/>
<dbReference type="Reactome" id="R-HSA-2161541">
    <property type="pathway name" value="Abacavir metabolism"/>
</dbReference>
<dbReference type="Reactome" id="R-HSA-5365859">
    <property type="pathway name" value="RA biosynthesis pathway"/>
</dbReference>
<dbReference type="Reactome" id="R-HSA-71384">
    <property type="pathway name" value="Ethanol oxidation"/>
</dbReference>
<dbReference type="SABIO-RK" id="P07327"/>
<dbReference type="SignaLink" id="P07327"/>
<dbReference type="BioGRID-ORCS" id="124">
    <property type="hits" value="13 hits in 1147 CRISPR screens"/>
</dbReference>
<dbReference type="ChiTaRS" id="ADH1A">
    <property type="organism name" value="human"/>
</dbReference>
<dbReference type="EvolutionaryTrace" id="P07327"/>
<dbReference type="GeneWiki" id="ADH1A"/>
<dbReference type="GenomeRNAi" id="124"/>
<dbReference type="Pharos" id="P07327">
    <property type="development level" value="Tclin"/>
</dbReference>
<dbReference type="PRO" id="PR:P07327"/>
<dbReference type="Proteomes" id="UP000005640">
    <property type="component" value="Chromosome 4"/>
</dbReference>
<dbReference type="RNAct" id="P07327">
    <property type="molecule type" value="protein"/>
</dbReference>
<dbReference type="Bgee" id="ENSG00000187758">
    <property type="expression patterns" value="Expressed in right lobe of liver and 112 other cell types or tissues"/>
</dbReference>
<dbReference type="GO" id="GO:0036064">
    <property type="term" value="C:ciliary basal body"/>
    <property type="evidence" value="ECO:0000314"/>
    <property type="project" value="HPA"/>
</dbReference>
<dbReference type="GO" id="GO:0005929">
    <property type="term" value="C:cilium"/>
    <property type="evidence" value="ECO:0000314"/>
    <property type="project" value="HPA"/>
</dbReference>
<dbReference type="GO" id="GO:0005829">
    <property type="term" value="C:cytosol"/>
    <property type="evidence" value="ECO:0000314"/>
    <property type="project" value="HPA"/>
</dbReference>
<dbReference type="GO" id="GO:0005654">
    <property type="term" value="C:nucleoplasm"/>
    <property type="evidence" value="ECO:0000314"/>
    <property type="project" value="HPA"/>
</dbReference>
<dbReference type="GO" id="GO:0005886">
    <property type="term" value="C:plasma membrane"/>
    <property type="evidence" value="ECO:0000314"/>
    <property type="project" value="HPA"/>
</dbReference>
<dbReference type="GO" id="GO:0004022">
    <property type="term" value="F:alcohol dehydrogenase (NAD+) activity"/>
    <property type="evidence" value="ECO:0000314"/>
    <property type="project" value="UniProtKB"/>
</dbReference>
<dbReference type="GO" id="GO:0004745">
    <property type="term" value="F:all-trans-retinol dehydrogenase (NAD+) activity"/>
    <property type="evidence" value="ECO:0000318"/>
    <property type="project" value="GO_Central"/>
</dbReference>
<dbReference type="GO" id="GO:1990362">
    <property type="term" value="F:butanol dehydrogenase (NAD+) activity"/>
    <property type="evidence" value="ECO:0007669"/>
    <property type="project" value="RHEA"/>
</dbReference>
<dbReference type="GO" id="GO:0008270">
    <property type="term" value="F:zinc ion binding"/>
    <property type="evidence" value="ECO:0000318"/>
    <property type="project" value="GO_Central"/>
</dbReference>
<dbReference type="GO" id="GO:0006066">
    <property type="term" value="P:alcohol metabolic process"/>
    <property type="evidence" value="ECO:0000314"/>
    <property type="project" value="UniProtKB"/>
</dbReference>
<dbReference type="GO" id="GO:0042573">
    <property type="term" value="P:retinoic acid metabolic process"/>
    <property type="evidence" value="ECO:0000318"/>
    <property type="project" value="GO_Central"/>
</dbReference>
<dbReference type="GO" id="GO:0042572">
    <property type="term" value="P:retinol metabolic process"/>
    <property type="evidence" value="ECO:0000318"/>
    <property type="project" value="GO_Central"/>
</dbReference>
<dbReference type="CDD" id="cd08299">
    <property type="entry name" value="alcohol_DH_class_I_II_IV"/>
    <property type="match status" value="1"/>
</dbReference>
<dbReference type="FunFam" id="3.40.50.720:FF:000003">
    <property type="entry name" value="S-(hydroxymethyl)glutathione dehydrogenase"/>
    <property type="match status" value="1"/>
</dbReference>
<dbReference type="FunFam" id="3.90.180.10:FF:000001">
    <property type="entry name" value="S-(hydroxymethyl)glutathione dehydrogenase"/>
    <property type="match status" value="1"/>
</dbReference>
<dbReference type="Gene3D" id="3.90.180.10">
    <property type="entry name" value="Medium-chain alcohol dehydrogenases, catalytic domain"/>
    <property type="match status" value="1"/>
</dbReference>
<dbReference type="Gene3D" id="3.40.50.720">
    <property type="entry name" value="NAD(P)-binding Rossmann-like Domain"/>
    <property type="match status" value="1"/>
</dbReference>
<dbReference type="InterPro" id="IPR013149">
    <property type="entry name" value="ADH-like_C"/>
</dbReference>
<dbReference type="InterPro" id="IPR013154">
    <property type="entry name" value="ADH-like_N"/>
</dbReference>
<dbReference type="InterPro" id="IPR002328">
    <property type="entry name" value="ADH_Zn_CS"/>
</dbReference>
<dbReference type="InterPro" id="IPR011032">
    <property type="entry name" value="GroES-like_sf"/>
</dbReference>
<dbReference type="InterPro" id="IPR036291">
    <property type="entry name" value="NAD(P)-bd_dom_sf"/>
</dbReference>
<dbReference type="InterPro" id="IPR020843">
    <property type="entry name" value="PKS_ER"/>
</dbReference>
<dbReference type="PANTHER" id="PTHR43880">
    <property type="entry name" value="ALCOHOL DEHYDROGENASE"/>
    <property type="match status" value="1"/>
</dbReference>
<dbReference type="PANTHER" id="PTHR43880:SF1">
    <property type="entry name" value="ALCOHOL DEHYDROGENASE 1A"/>
    <property type="match status" value="1"/>
</dbReference>
<dbReference type="Pfam" id="PF08240">
    <property type="entry name" value="ADH_N"/>
    <property type="match status" value="1"/>
</dbReference>
<dbReference type="Pfam" id="PF00107">
    <property type="entry name" value="ADH_zinc_N"/>
    <property type="match status" value="1"/>
</dbReference>
<dbReference type="SMART" id="SM00829">
    <property type="entry name" value="PKS_ER"/>
    <property type="match status" value="1"/>
</dbReference>
<dbReference type="SUPFAM" id="SSF50129">
    <property type="entry name" value="GroES-like"/>
    <property type="match status" value="2"/>
</dbReference>
<dbReference type="SUPFAM" id="SSF51735">
    <property type="entry name" value="NAD(P)-binding Rossmann-fold domains"/>
    <property type="match status" value="1"/>
</dbReference>
<dbReference type="PROSITE" id="PS00059">
    <property type="entry name" value="ADH_ZINC"/>
    <property type="match status" value="1"/>
</dbReference>
<comment type="function">
    <text evidence="4">Alcohol dehydrogenase (PubMed:2738060). Oxidizes primary as well as secondary alcohols. Ethanol is a very poor substrate (PubMed:2738060).</text>
</comment>
<comment type="catalytic activity">
    <reaction evidence="4">
        <text>a primary alcohol + NAD(+) = an aldehyde + NADH + H(+)</text>
        <dbReference type="Rhea" id="RHEA:10736"/>
        <dbReference type="ChEBI" id="CHEBI:15378"/>
        <dbReference type="ChEBI" id="CHEBI:15734"/>
        <dbReference type="ChEBI" id="CHEBI:17478"/>
        <dbReference type="ChEBI" id="CHEBI:57540"/>
        <dbReference type="ChEBI" id="CHEBI:57945"/>
        <dbReference type="EC" id="1.1.1.1"/>
    </reaction>
</comment>
<comment type="catalytic activity">
    <reaction evidence="4">
        <text>a secondary alcohol + NAD(+) = a ketone + NADH + H(+)</text>
        <dbReference type="Rhea" id="RHEA:10740"/>
        <dbReference type="ChEBI" id="CHEBI:15378"/>
        <dbReference type="ChEBI" id="CHEBI:17087"/>
        <dbReference type="ChEBI" id="CHEBI:35681"/>
        <dbReference type="ChEBI" id="CHEBI:57540"/>
        <dbReference type="ChEBI" id="CHEBI:57945"/>
        <dbReference type="EC" id="1.1.1.1"/>
    </reaction>
</comment>
<comment type="catalytic activity">
    <reaction evidence="4">
        <text>butan-1-ol + NAD(+) = butanal + NADH + H(+)</text>
        <dbReference type="Rhea" id="RHEA:33199"/>
        <dbReference type="ChEBI" id="CHEBI:15378"/>
        <dbReference type="ChEBI" id="CHEBI:15743"/>
        <dbReference type="ChEBI" id="CHEBI:28885"/>
        <dbReference type="ChEBI" id="CHEBI:57540"/>
        <dbReference type="ChEBI" id="CHEBI:57945"/>
    </reaction>
</comment>
<comment type="catalytic activity">
    <reaction evidence="4">
        <text>1-propanol + NAD(+) = propanal + NADH + H(+)</text>
        <dbReference type="Rhea" id="RHEA:50704"/>
        <dbReference type="ChEBI" id="CHEBI:15378"/>
        <dbReference type="ChEBI" id="CHEBI:17153"/>
        <dbReference type="ChEBI" id="CHEBI:28831"/>
        <dbReference type="ChEBI" id="CHEBI:57540"/>
        <dbReference type="ChEBI" id="CHEBI:57945"/>
    </reaction>
</comment>
<comment type="cofactor">
    <cofactor evidence="2 3">
        <name>Zn(2+)</name>
        <dbReference type="ChEBI" id="CHEBI:29105"/>
    </cofactor>
    <text evidence="2 3">Binds 2 Zn(2+) ions per subunit.</text>
</comment>
<comment type="biophysicochemical properties">
    <kinetics>
        <KM evidence="4">32 uM for butan-1-ol</KM>
        <KM evidence="4">14 uM for 1-propanol</KM>
        <KM evidence="4">6100 uM for ethanol</KM>
    </kinetics>
</comment>
<comment type="subunit">
    <text evidence="2 3">Dimer of identical or heterodimer of closely related subunits alpha, beta, or gamma that are encoded by genes ADH1A, ADH1B, and ADH1C, respectively.</text>
</comment>
<comment type="subcellular location">
    <subcellularLocation>
        <location>Cytoplasm</location>
    </subcellularLocation>
</comment>
<comment type="miscellaneous">
    <text>There are 7 different ADH's isozymes in human: three belongs to class-I: ADH1A, ADH1B, and ADH1C, one to class-II: ADH4, one to class-III: ADH5, one to class-IV: ADH7 and one to class-V: ADH6.</text>
</comment>
<comment type="similarity">
    <text evidence="6">Belongs to the zinc-containing alcohol dehydrogenase family.</text>
</comment>
<reference key="1">
    <citation type="journal article" date="1986" name="Biochemistry">
        <title>cDNA and protein structure for the alpha subunit of human liver alcohol dehydrogenase.</title>
        <authorList>
            <person name="von Bahr-Lindstroem H."/>
            <person name="Hoeoeg J.-O."/>
            <person name="Heden L.-O."/>
            <person name="Kaiser R."/>
            <person name="Fleetwood L."/>
            <person name="Larsson K."/>
            <person name="Lake M."/>
            <person name="Holmquist B."/>
            <person name="Holmgren A."/>
            <person name="Hempel J."/>
            <person name="Vallee B.L."/>
            <person name="Joernvall H."/>
        </authorList>
    </citation>
    <scope>NUCLEOTIDE SEQUENCE [MRNA]</scope>
    <scope>PROTEIN SEQUENCE OF 2-375</scope>
    <scope>CLEAVAGE OF INITIATOR METHIONINE</scope>
    <scope>ACETYLATION AT SER-2</scope>
    <source>
        <tissue>Liver</tissue>
    </source>
</reference>
<reference key="2">
    <citation type="journal article" date="1986" name="Proc. Natl. Acad. Sci. U.S.A.">
        <title>Three human alcohol dehydrogenase subunits: cDNA structure and molecular and evolutionary divergence.</title>
        <authorList>
            <person name="Ikuta T."/>
            <person name="Szeto S."/>
            <person name="Yoshida A."/>
        </authorList>
    </citation>
    <scope>NUCLEOTIDE SEQUENCE [MRNA]</scope>
</reference>
<reference key="3">
    <citation type="journal article" date="1989" name="FEBS Lett.">
        <title>Molecular structure of the human alcohol dehydrogenase 1 gene.</title>
        <authorList>
            <person name="Matsuo Y."/>
            <person name="Yokoyama S."/>
        </authorList>
    </citation>
    <scope>NUCLEOTIDE SEQUENCE [GENOMIC DNA]</scope>
</reference>
<reference key="4">
    <citation type="submission" date="2004-10" db="EMBL/GenBank/DDBJ databases">
        <title>Cloning of human full-length CDSs in BD Creator(TM) system donor vector.</title>
        <authorList>
            <person name="Kalnine N."/>
            <person name="Chen X."/>
            <person name="Rolfs A."/>
            <person name="Halleck A."/>
            <person name="Hines L."/>
            <person name="Eisenstein S."/>
            <person name="Koundinya M."/>
            <person name="Raphael J."/>
            <person name="Moreira D."/>
            <person name="Kelley T."/>
            <person name="LaBaer J."/>
            <person name="Lin Y."/>
            <person name="Phelan M."/>
            <person name="Farmer A."/>
        </authorList>
    </citation>
    <scope>NUCLEOTIDE SEQUENCE [LARGE SCALE MRNA]</scope>
</reference>
<reference key="5">
    <citation type="journal article" date="2004" name="Nat. Genet.">
        <title>Complete sequencing and characterization of 21,243 full-length human cDNAs.</title>
        <authorList>
            <person name="Ota T."/>
            <person name="Suzuki Y."/>
            <person name="Nishikawa T."/>
            <person name="Otsuki T."/>
            <person name="Sugiyama T."/>
            <person name="Irie R."/>
            <person name="Wakamatsu A."/>
            <person name="Hayashi K."/>
            <person name="Sato H."/>
            <person name="Nagai K."/>
            <person name="Kimura K."/>
            <person name="Makita H."/>
            <person name="Sekine M."/>
            <person name="Obayashi M."/>
            <person name="Nishi T."/>
            <person name="Shibahara T."/>
            <person name="Tanaka T."/>
            <person name="Ishii S."/>
            <person name="Yamamoto J."/>
            <person name="Saito K."/>
            <person name="Kawai Y."/>
            <person name="Isono Y."/>
            <person name="Nakamura Y."/>
            <person name="Nagahari K."/>
            <person name="Murakami K."/>
            <person name="Yasuda T."/>
            <person name="Iwayanagi T."/>
            <person name="Wagatsuma M."/>
            <person name="Shiratori A."/>
            <person name="Sudo H."/>
            <person name="Hosoiri T."/>
            <person name="Kaku Y."/>
            <person name="Kodaira H."/>
            <person name="Kondo H."/>
            <person name="Sugawara M."/>
            <person name="Takahashi M."/>
            <person name="Kanda K."/>
            <person name="Yokoi T."/>
            <person name="Furuya T."/>
            <person name="Kikkawa E."/>
            <person name="Omura Y."/>
            <person name="Abe K."/>
            <person name="Kamihara K."/>
            <person name="Katsuta N."/>
            <person name="Sato K."/>
            <person name="Tanikawa M."/>
            <person name="Yamazaki M."/>
            <person name="Ninomiya K."/>
            <person name="Ishibashi T."/>
            <person name="Yamashita H."/>
            <person name="Murakawa K."/>
            <person name="Fujimori K."/>
            <person name="Tanai H."/>
            <person name="Kimata M."/>
            <person name="Watanabe M."/>
            <person name="Hiraoka S."/>
            <person name="Chiba Y."/>
            <person name="Ishida S."/>
            <person name="Ono Y."/>
            <person name="Takiguchi S."/>
            <person name="Watanabe S."/>
            <person name="Yosida M."/>
            <person name="Hotuta T."/>
            <person name="Kusano J."/>
            <person name="Kanehori K."/>
            <person name="Takahashi-Fujii A."/>
            <person name="Hara H."/>
            <person name="Tanase T.-O."/>
            <person name="Nomura Y."/>
            <person name="Togiya S."/>
            <person name="Komai F."/>
            <person name="Hara R."/>
            <person name="Takeuchi K."/>
            <person name="Arita M."/>
            <person name="Imose N."/>
            <person name="Musashino K."/>
            <person name="Yuuki H."/>
            <person name="Oshima A."/>
            <person name="Sasaki N."/>
            <person name="Aotsuka S."/>
            <person name="Yoshikawa Y."/>
            <person name="Matsunawa H."/>
            <person name="Ichihara T."/>
            <person name="Shiohata N."/>
            <person name="Sano S."/>
            <person name="Moriya S."/>
            <person name="Momiyama H."/>
            <person name="Satoh N."/>
            <person name="Takami S."/>
            <person name="Terashima Y."/>
            <person name="Suzuki O."/>
            <person name="Nakagawa S."/>
            <person name="Senoh A."/>
            <person name="Mizoguchi H."/>
            <person name="Goto Y."/>
            <person name="Shimizu F."/>
            <person name="Wakebe H."/>
            <person name="Hishigaki H."/>
            <person name="Watanabe T."/>
            <person name="Sugiyama A."/>
            <person name="Takemoto M."/>
            <person name="Kawakami B."/>
            <person name="Yamazaki M."/>
            <person name="Watanabe K."/>
            <person name="Kumagai A."/>
            <person name="Itakura S."/>
            <person name="Fukuzumi Y."/>
            <person name="Fujimori Y."/>
            <person name="Komiyama M."/>
            <person name="Tashiro H."/>
            <person name="Tanigami A."/>
            <person name="Fujiwara T."/>
            <person name="Ono T."/>
            <person name="Yamada K."/>
            <person name="Fujii Y."/>
            <person name="Ozaki K."/>
            <person name="Hirao M."/>
            <person name="Ohmori Y."/>
            <person name="Kawabata A."/>
            <person name="Hikiji T."/>
            <person name="Kobatake N."/>
            <person name="Inagaki H."/>
            <person name="Ikema Y."/>
            <person name="Okamoto S."/>
            <person name="Okitani R."/>
            <person name="Kawakami T."/>
            <person name="Noguchi S."/>
            <person name="Itoh T."/>
            <person name="Shigeta K."/>
            <person name="Senba T."/>
            <person name="Matsumura K."/>
            <person name="Nakajima Y."/>
            <person name="Mizuno T."/>
            <person name="Morinaga M."/>
            <person name="Sasaki M."/>
            <person name="Togashi T."/>
            <person name="Oyama M."/>
            <person name="Hata H."/>
            <person name="Watanabe M."/>
            <person name="Komatsu T."/>
            <person name="Mizushima-Sugano J."/>
            <person name="Satoh T."/>
            <person name="Shirai Y."/>
            <person name="Takahashi Y."/>
            <person name="Nakagawa K."/>
            <person name="Okumura K."/>
            <person name="Nagase T."/>
            <person name="Nomura N."/>
            <person name="Kikuchi H."/>
            <person name="Masuho Y."/>
            <person name="Yamashita R."/>
            <person name="Nakai K."/>
            <person name="Yada T."/>
            <person name="Nakamura Y."/>
            <person name="Ohara O."/>
            <person name="Isogai T."/>
            <person name="Sugano S."/>
        </authorList>
    </citation>
    <scope>NUCLEOTIDE SEQUENCE [LARGE SCALE MRNA]</scope>
    <source>
        <tissue>Heart</tissue>
    </source>
</reference>
<reference key="6">
    <citation type="submission" date="2005-02" db="EMBL/GenBank/DDBJ databases">
        <authorList>
            <consortium name="NIEHS SNPs program"/>
        </authorList>
    </citation>
    <scope>NUCLEOTIDE SEQUENCE [GENOMIC DNA]</scope>
</reference>
<reference key="7">
    <citation type="submission" date="2005-07" db="EMBL/GenBank/DDBJ databases">
        <authorList>
            <person name="Mural R.J."/>
            <person name="Istrail S."/>
            <person name="Sutton G.G."/>
            <person name="Florea L."/>
            <person name="Halpern A.L."/>
            <person name="Mobarry C.M."/>
            <person name="Lippert R."/>
            <person name="Walenz B."/>
            <person name="Shatkay H."/>
            <person name="Dew I."/>
            <person name="Miller J.R."/>
            <person name="Flanigan M.J."/>
            <person name="Edwards N.J."/>
            <person name="Bolanos R."/>
            <person name="Fasulo D."/>
            <person name="Halldorsson B.V."/>
            <person name="Hannenhalli S."/>
            <person name="Turner R."/>
            <person name="Yooseph S."/>
            <person name="Lu F."/>
            <person name="Nusskern D.R."/>
            <person name="Shue B.C."/>
            <person name="Zheng X.H."/>
            <person name="Zhong F."/>
            <person name="Delcher A.L."/>
            <person name="Huson D.H."/>
            <person name="Kravitz S.A."/>
            <person name="Mouchard L."/>
            <person name="Reinert K."/>
            <person name="Remington K.A."/>
            <person name="Clark A.G."/>
            <person name="Waterman M.S."/>
            <person name="Eichler E.E."/>
            <person name="Adams M.D."/>
            <person name="Hunkapiller M.W."/>
            <person name="Myers E.W."/>
            <person name="Venter J.C."/>
        </authorList>
    </citation>
    <scope>NUCLEOTIDE SEQUENCE [LARGE SCALE GENOMIC DNA]</scope>
</reference>
<reference key="8">
    <citation type="journal article" date="2004" name="Genome Res.">
        <title>The status, quality, and expansion of the NIH full-length cDNA project: the Mammalian Gene Collection (MGC).</title>
        <authorList>
            <consortium name="The MGC Project Team"/>
        </authorList>
    </citation>
    <scope>NUCLEOTIDE SEQUENCE [LARGE SCALE MRNA]</scope>
    <source>
        <tissue>Brain</tissue>
    </source>
</reference>
<reference key="9">
    <citation type="journal article" date="1990" name="Genomics">
        <title>The human class I alcohol dehydrogenase gene cluster: three genes are tandemly organized in an 80-kb-long segment of the genome.</title>
        <authorList>
            <person name="Yasunami M."/>
            <person name="Kikuchi I."/>
            <person name="Sarapata D."/>
            <person name="Yoshida A."/>
        </authorList>
    </citation>
    <scope>NUCLEOTIDE SEQUENCE [GENOMIC DNA] OF 1-6</scope>
</reference>
<reference key="10">
    <citation type="journal article" date="1989" name="J. Biol. Chem.">
        <title>Stereospecific oxidation of secondary alcohols by human alcohol dehydrogenases.</title>
        <authorList>
            <person name="Stone C.L."/>
            <person name="Li T.K."/>
            <person name="Bosron W.F."/>
        </authorList>
    </citation>
    <scope>FUNCTION</scope>
    <scope>CATALYTIC ACTIVITY</scope>
    <scope>BIOPHYSICOCHEMICAL PROPERTIES</scope>
</reference>
<reference key="11">
    <citation type="journal article" date="2014" name="J. Proteomics">
        <title>An enzyme assisted RP-RPLC approach for in-depth analysis of human liver phosphoproteome.</title>
        <authorList>
            <person name="Bian Y."/>
            <person name="Song C."/>
            <person name="Cheng K."/>
            <person name="Dong M."/>
            <person name="Wang F."/>
            <person name="Huang J."/>
            <person name="Sun D."/>
            <person name="Wang L."/>
            <person name="Ye M."/>
            <person name="Zou H."/>
        </authorList>
    </citation>
    <scope>IDENTIFICATION BY MASS SPECTROMETRY [LARGE SCALE ANALYSIS]</scope>
    <source>
        <tissue>Liver</tissue>
    </source>
</reference>
<reference key="12">
    <citation type="journal article" date="2004" name="Biochemistry">
        <title>Structure of three class I human alcohol dehydrogenases complexed with isoenzyme specific formamide inhibitors.</title>
        <authorList>
            <person name="Gibbons B.J."/>
            <person name="Hurley T.D."/>
        </authorList>
    </citation>
    <scope>X-RAY CRYSTALLOGRAPHY (2.49 ANGSTROMS) OF 2-375 IN COMPLEX WITH NAD AND ZINC IONS</scope>
</reference>
<reference key="13">
    <citation type="journal article" date="2001" name="Protein Sci.">
        <title>Three-dimensional structures of the three human class I alcohol dehydrogenases.</title>
        <authorList>
            <person name="Niederhut M.S."/>
            <person name="Gibbons B.J."/>
            <person name="Perez-Miller S."/>
            <person name="Hurley T.D."/>
        </authorList>
    </citation>
    <scope>X-RAY CRYSTALLOGRAPHY (2.5 ANGSTROMS) OF 2-375 IN COMPLEX WITH NAD AND ZINC IONS</scope>
</reference>
<protein>
    <recommendedName>
        <fullName>Alcohol dehydrogenase 1A</fullName>
        <ecNumber evidence="4">1.1.1.1</ecNumber>
    </recommendedName>
    <alternativeName>
        <fullName>Alcohol dehydrogenase subunit alpha</fullName>
    </alternativeName>
</protein>